<keyword id="KW-1185">Reference proteome</keyword>
<keyword id="KW-0687">Ribonucleoprotein</keyword>
<keyword id="KW-0689">Ribosomal protein</keyword>
<keyword id="KW-0694">RNA-binding</keyword>
<keyword id="KW-0699">rRNA-binding</keyword>
<name>RL2_NITWN</name>
<gene>
    <name evidence="1" type="primary">rplB</name>
    <name type="ordered locus">Nwi_1367</name>
</gene>
<evidence type="ECO:0000255" key="1">
    <source>
        <dbReference type="HAMAP-Rule" id="MF_01320"/>
    </source>
</evidence>
<evidence type="ECO:0000256" key="2">
    <source>
        <dbReference type="SAM" id="MobiDB-lite"/>
    </source>
</evidence>
<evidence type="ECO:0000305" key="3"/>
<comment type="function">
    <text evidence="1">One of the primary rRNA binding proteins. Required for association of the 30S and 50S subunits to form the 70S ribosome, for tRNA binding and peptide bond formation. It has been suggested to have peptidyltransferase activity; this is somewhat controversial. Makes several contacts with the 16S rRNA in the 70S ribosome.</text>
</comment>
<comment type="subunit">
    <text evidence="1">Part of the 50S ribosomal subunit. Forms a bridge to the 30S subunit in the 70S ribosome.</text>
</comment>
<comment type="similarity">
    <text evidence="1">Belongs to the universal ribosomal protein uL2 family.</text>
</comment>
<proteinExistence type="inferred from homology"/>
<accession>Q3SSW3</accession>
<sequence length="277" mass="30435">MALKTYNPTTPGQRQLVMVDRSALYKGKPVKTLTEGKRGKGGRNNTGRITVRFRGGGHKQAYRNVDFKRGKTDVPAVVERLEYDPNRTAFIALIKYQDGEQAYILAPQRMAVGDTVVAGNYVDVKPGNVMPLGNMPVGTIVHNVEMKIGKGGQLARSAGTYAQIVGRDQDYVILRLNSGEQRLVHGRCRGAIGAVSNPDHMNTSVGKAGRTRWMGRRPHNRGVVMNPIDHPHGGGEGRTSGGRHPVTPWGKPTKGKKTRSNKSTNKFILISRHKRKK</sequence>
<protein>
    <recommendedName>
        <fullName evidence="1">Large ribosomal subunit protein uL2</fullName>
    </recommendedName>
    <alternativeName>
        <fullName evidence="3">50S ribosomal protein L2</fullName>
    </alternativeName>
</protein>
<reference key="1">
    <citation type="journal article" date="2006" name="Appl. Environ. Microbiol.">
        <title>Genome sequence of the chemolithoautotrophic nitrite-oxidizing bacterium Nitrobacter winogradskyi Nb-255.</title>
        <authorList>
            <person name="Starkenburg S.R."/>
            <person name="Chain P.S.G."/>
            <person name="Sayavedra-Soto L.A."/>
            <person name="Hauser L."/>
            <person name="Land M.L."/>
            <person name="Larimer F.W."/>
            <person name="Malfatti S.A."/>
            <person name="Klotz M.G."/>
            <person name="Bottomley P.J."/>
            <person name="Arp D.J."/>
            <person name="Hickey W.J."/>
        </authorList>
    </citation>
    <scope>NUCLEOTIDE SEQUENCE [LARGE SCALE GENOMIC DNA]</scope>
    <source>
        <strain>ATCC 25391 / DSM 10237 / CIP 104748 / NCIMB 11846 / Nb-255</strain>
    </source>
</reference>
<organism>
    <name type="scientific">Nitrobacter winogradskyi (strain ATCC 25391 / DSM 10237 / CIP 104748 / NCIMB 11846 / Nb-255)</name>
    <dbReference type="NCBI Taxonomy" id="323098"/>
    <lineage>
        <taxon>Bacteria</taxon>
        <taxon>Pseudomonadati</taxon>
        <taxon>Pseudomonadota</taxon>
        <taxon>Alphaproteobacteria</taxon>
        <taxon>Hyphomicrobiales</taxon>
        <taxon>Nitrobacteraceae</taxon>
        <taxon>Nitrobacter</taxon>
    </lineage>
</organism>
<feature type="chain" id="PRO_0000237215" description="Large ribosomal subunit protein uL2">
    <location>
        <begin position="1"/>
        <end position="277"/>
    </location>
</feature>
<feature type="region of interest" description="Disordered" evidence="2">
    <location>
        <begin position="199"/>
        <end position="277"/>
    </location>
</feature>
<feature type="compositionally biased region" description="Basic residues" evidence="2">
    <location>
        <begin position="209"/>
        <end position="220"/>
    </location>
</feature>
<dbReference type="EMBL" id="CP000115">
    <property type="protein sequence ID" value="ABA04628.1"/>
    <property type="molecule type" value="Genomic_DNA"/>
</dbReference>
<dbReference type="RefSeq" id="WP_011314644.1">
    <property type="nucleotide sequence ID" value="NC_007406.1"/>
</dbReference>
<dbReference type="SMR" id="Q3SSW3"/>
<dbReference type="STRING" id="323098.Nwi_1367"/>
<dbReference type="KEGG" id="nwi:Nwi_1367"/>
<dbReference type="eggNOG" id="COG0090">
    <property type="taxonomic scope" value="Bacteria"/>
</dbReference>
<dbReference type="HOGENOM" id="CLU_036235_2_1_5"/>
<dbReference type="OrthoDB" id="9778722at2"/>
<dbReference type="Proteomes" id="UP000002531">
    <property type="component" value="Chromosome"/>
</dbReference>
<dbReference type="GO" id="GO:0015934">
    <property type="term" value="C:large ribosomal subunit"/>
    <property type="evidence" value="ECO:0007669"/>
    <property type="project" value="InterPro"/>
</dbReference>
<dbReference type="GO" id="GO:0019843">
    <property type="term" value="F:rRNA binding"/>
    <property type="evidence" value="ECO:0007669"/>
    <property type="project" value="UniProtKB-UniRule"/>
</dbReference>
<dbReference type="GO" id="GO:0003735">
    <property type="term" value="F:structural constituent of ribosome"/>
    <property type="evidence" value="ECO:0007669"/>
    <property type="project" value="InterPro"/>
</dbReference>
<dbReference type="GO" id="GO:0016740">
    <property type="term" value="F:transferase activity"/>
    <property type="evidence" value="ECO:0007669"/>
    <property type="project" value="InterPro"/>
</dbReference>
<dbReference type="GO" id="GO:0002181">
    <property type="term" value="P:cytoplasmic translation"/>
    <property type="evidence" value="ECO:0007669"/>
    <property type="project" value="TreeGrafter"/>
</dbReference>
<dbReference type="FunFam" id="2.30.30.30:FF:000055">
    <property type="entry name" value="50S ribosomal protein L2"/>
    <property type="match status" value="1"/>
</dbReference>
<dbReference type="FunFam" id="2.40.50.140:FF:000003">
    <property type="entry name" value="50S ribosomal protein L2"/>
    <property type="match status" value="1"/>
</dbReference>
<dbReference type="FunFam" id="4.10.950.10:FF:000001">
    <property type="entry name" value="50S ribosomal protein L2"/>
    <property type="match status" value="1"/>
</dbReference>
<dbReference type="Gene3D" id="2.30.30.30">
    <property type="match status" value="1"/>
</dbReference>
<dbReference type="Gene3D" id="2.40.50.140">
    <property type="entry name" value="Nucleic acid-binding proteins"/>
    <property type="match status" value="1"/>
</dbReference>
<dbReference type="Gene3D" id="4.10.950.10">
    <property type="entry name" value="Ribosomal protein L2, domain 3"/>
    <property type="match status" value="1"/>
</dbReference>
<dbReference type="HAMAP" id="MF_01320_B">
    <property type="entry name" value="Ribosomal_uL2_B"/>
    <property type="match status" value="1"/>
</dbReference>
<dbReference type="InterPro" id="IPR012340">
    <property type="entry name" value="NA-bd_OB-fold"/>
</dbReference>
<dbReference type="InterPro" id="IPR014722">
    <property type="entry name" value="Rib_uL2_dom2"/>
</dbReference>
<dbReference type="InterPro" id="IPR002171">
    <property type="entry name" value="Ribosomal_uL2"/>
</dbReference>
<dbReference type="InterPro" id="IPR005880">
    <property type="entry name" value="Ribosomal_uL2_bac/org-type"/>
</dbReference>
<dbReference type="InterPro" id="IPR022669">
    <property type="entry name" value="Ribosomal_uL2_C"/>
</dbReference>
<dbReference type="InterPro" id="IPR022671">
    <property type="entry name" value="Ribosomal_uL2_CS"/>
</dbReference>
<dbReference type="InterPro" id="IPR014726">
    <property type="entry name" value="Ribosomal_uL2_dom3"/>
</dbReference>
<dbReference type="InterPro" id="IPR022666">
    <property type="entry name" value="Ribosomal_uL2_RNA-bd_dom"/>
</dbReference>
<dbReference type="InterPro" id="IPR008991">
    <property type="entry name" value="Translation_prot_SH3-like_sf"/>
</dbReference>
<dbReference type="NCBIfam" id="TIGR01171">
    <property type="entry name" value="rplB_bact"/>
    <property type="match status" value="1"/>
</dbReference>
<dbReference type="PANTHER" id="PTHR13691:SF5">
    <property type="entry name" value="LARGE RIBOSOMAL SUBUNIT PROTEIN UL2M"/>
    <property type="match status" value="1"/>
</dbReference>
<dbReference type="PANTHER" id="PTHR13691">
    <property type="entry name" value="RIBOSOMAL PROTEIN L2"/>
    <property type="match status" value="1"/>
</dbReference>
<dbReference type="Pfam" id="PF00181">
    <property type="entry name" value="Ribosomal_L2"/>
    <property type="match status" value="1"/>
</dbReference>
<dbReference type="Pfam" id="PF03947">
    <property type="entry name" value="Ribosomal_L2_C"/>
    <property type="match status" value="1"/>
</dbReference>
<dbReference type="PIRSF" id="PIRSF002158">
    <property type="entry name" value="Ribosomal_L2"/>
    <property type="match status" value="1"/>
</dbReference>
<dbReference type="SMART" id="SM01383">
    <property type="entry name" value="Ribosomal_L2"/>
    <property type="match status" value="1"/>
</dbReference>
<dbReference type="SMART" id="SM01382">
    <property type="entry name" value="Ribosomal_L2_C"/>
    <property type="match status" value="1"/>
</dbReference>
<dbReference type="SUPFAM" id="SSF50249">
    <property type="entry name" value="Nucleic acid-binding proteins"/>
    <property type="match status" value="1"/>
</dbReference>
<dbReference type="SUPFAM" id="SSF50104">
    <property type="entry name" value="Translation proteins SH3-like domain"/>
    <property type="match status" value="1"/>
</dbReference>
<dbReference type="PROSITE" id="PS00467">
    <property type="entry name" value="RIBOSOMAL_L2"/>
    <property type="match status" value="1"/>
</dbReference>